<dbReference type="EMBL" id="CP000969">
    <property type="protein sequence ID" value="ACB09729.1"/>
    <property type="molecule type" value="Genomic_DNA"/>
</dbReference>
<dbReference type="RefSeq" id="WP_012311092.1">
    <property type="nucleotide sequence ID" value="NC_010483.1"/>
</dbReference>
<dbReference type="SMR" id="B1LBN1"/>
<dbReference type="KEGG" id="trq:TRQ2_1385"/>
<dbReference type="HOGENOM" id="CLU_073626_1_2_0"/>
<dbReference type="Proteomes" id="UP000001687">
    <property type="component" value="Chromosome"/>
</dbReference>
<dbReference type="GO" id="GO:0022627">
    <property type="term" value="C:cytosolic small ribosomal subunit"/>
    <property type="evidence" value="ECO:0007669"/>
    <property type="project" value="TreeGrafter"/>
</dbReference>
<dbReference type="GO" id="GO:0019843">
    <property type="term" value="F:rRNA binding"/>
    <property type="evidence" value="ECO:0007669"/>
    <property type="project" value="UniProtKB-UniRule"/>
</dbReference>
<dbReference type="GO" id="GO:0003735">
    <property type="term" value="F:structural constituent of ribosome"/>
    <property type="evidence" value="ECO:0007669"/>
    <property type="project" value="InterPro"/>
</dbReference>
<dbReference type="GO" id="GO:0006412">
    <property type="term" value="P:translation"/>
    <property type="evidence" value="ECO:0007669"/>
    <property type="project" value="UniProtKB-UniRule"/>
</dbReference>
<dbReference type="CDD" id="cd00364">
    <property type="entry name" value="Ribosomal_uS17"/>
    <property type="match status" value="1"/>
</dbReference>
<dbReference type="FunFam" id="2.40.50.140:FF:000204">
    <property type="entry name" value="30S ribosomal protein S17"/>
    <property type="match status" value="1"/>
</dbReference>
<dbReference type="Gene3D" id="2.40.50.140">
    <property type="entry name" value="Nucleic acid-binding proteins"/>
    <property type="match status" value="1"/>
</dbReference>
<dbReference type="HAMAP" id="MF_01345_B">
    <property type="entry name" value="Ribosomal_uS17_B"/>
    <property type="match status" value="1"/>
</dbReference>
<dbReference type="InterPro" id="IPR012340">
    <property type="entry name" value="NA-bd_OB-fold"/>
</dbReference>
<dbReference type="InterPro" id="IPR000266">
    <property type="entry name" value="Ribosomal_uS17"/>
</dbReference>
<dbReference type="InterPro" id="IPR019984">
    <property type="entry name" value="Ribosomal_uS17_bact/chlr"/>
</dbReference>
<dbReference type="InterPro" id="IPR019979">
    <property type="entry name" value="Ribosomal_uS17_CS"/>
</dbReference>
<dbReference type="NCBIfam" id="NF004123">
    <property type="entry name" value="PRK05610.1"/>
    <property type="match status" value="1"/>
</dbReference>
<dbReference type="NCBIfam" id="TIGR03635">
    <property type="entry name" value="uS17_bact"/>
    <property type="match status" value="1"/>
</dbReference>
<dbReference type="PANTHER" id="PTHR10744">
    <property type="entry name" value="40S RIBOSOMAL PROTEIN S11 FAMILY MEMBER"/>
    <property type="match status" value="1"/>
</dbReference>
<dbReference type="PANTHER" id="PTHR10744:SF1">
    <property type="entry name" value="SMALL RIBOSOMAL SUBUNIT PROTEIN US17M"/>
    <property type="match status" value="1"/>
</dbReference>
<dbReference type="Pfam" id="PF00366">
    <property type="entry name" value="Ribosomal_S17"/>
    <property type="match status" value="1"/>
</dbReference>
<dbReference type="PRINTS" id="PR00973">
    <property type="entry name" value="RIBOSOMALS17"/>
</dbReference>
<dbReference type="SUPFAM" id="SSF50249">
    <property type="entry name" value="Nucleic acid-binding proteins"/>
    <property type="match status" value="1"/>
</dbReference>
<dbReference type="PROSITE" id="PS00056">
    <property type="entry name" value="RIBOSOMAL_S17"/>
    <property type="match status" value="1"/>
</dbReference>
<accession>B1LBN1</accession>
<protein>
    <recommendedName>
        <fullName evidence="1">Small ribosomal subunit protein uS17</fullName>
    </recommendedName>
    <alternativeName>
        <fullName evidence="2">30S ribosomal protein S17</fullName>
    </alternativeName>
</protein>
<organism>
    <name type="scientific">Thermotoga sp. (strain RQ2)</name>
    <dbReference type="NCBI Taxonomy" id="126740"/>
    <lineage>
        <taxon>Bacteria</taxon>
        <taxon>Thermotogati</taxon>
        <taxon>Thermotogota</taxon>
        <taxon>Thermotogae</taxon>
        <taxon>Thermotogales</taxon>
        <taxon>Thermotogaceae</taxon>
        <taxon>Thermotoga</taxon>
    </lineage>
</organism>
<name>RS17_THESQ</name>
<gene>
    <name evidence="1" type="primary">rpsQ</name>
    <name type="ordered locus">TRQ2_1385</name>
</gene>
<reference key="1">
    <citation type="journal article" date="2011" name="J. Bacteriol.">
        <title>Genome sequence of Thermotoga sp. strain RQ2, a hyperthermophilic bacterium isolated from a geothermally heated region of the seafloor near Ribeira Quente, the Azores.</title>
        <authorList>
            <person name="Swithers K.S."/>
            <person name="DiPippo J.L."/>
            <person name="Bruce D.C."/>
            <person name="Detter C."/>
            <person name="Tapia R."/>
            <person name="Han S."/>
            <person name="Saunders E."/>
            <person name="Goodwin L.A."/>
            <person name="Han J."/>
            <person name="Woyke T."/>
            <person name="Pitluck S."/>
            <person name="Pennacchio L."/>
            <person name="Nolan M."/>
            <person name="Mikhailova N."/>
            <person name="Lykidis A."/>
            <person name="Land M.L."/>
            <person name="Brettin T."/>
            <person name="Stetter K.O."/>
            <person name="Nelson K.E."/>
            <person name="Gogarten J.P."/>
            <person name="Noll K.M."/>
        </authorList>
    </citation>
    <scope>NUCLEOTIDE SEQUENCE [LARGE SCALE GENOMIC DNA]</scope>
    <source>
        <strain>RQ2</strain>
    </source>
</reference>
<feature type="chain" id="PRO_1000143317" description="Small ribosomal subunit protein uS17">
    <location>
        <begin position="1"/>
        <end position="107"/>
    </location>
</feature>
<comment type="function">
    <text evidence="1">One of the primary rRNA binding proteins, it binds specifically to the 5'-end of 16S ribosomal RNA.</text>
</comment>
<comment type="subunit">
    <text evidence="1">Part of the 30S ribosomal subunit.</text>
</comment>
<comment type="similarity">
    <text evidence="1">Belongs to the universal ribosomal protein uS17 family.</text>
</comment>
<evidence type="ECO:0000255" key="1">
    <source>
        <dbReference type="HAMAP-Rule" id="MF_01345"/>
    </source>
</evidence>
<evidence type="ECO:0000305" key="2"/>
<keyword id="KW-0687">Ribonucleoprotein</keyword>
<keyword id="KW-0689">Ribosomal protein</keyword>
<keyword id="KW-0694">RNA-binding</keyword>
<keyword id="KW-0699">rRNA-binding</keyword>
<sequence>MPRKRLTGIVVSDKMDKTVVVAVEKLVQHTIYKKYVKRTKKYHAHDERNECKIGDVVEIEETRPLSKTKRWRVVRIIQRFEPERVLKEEEDIQEEIEAVEGKGGVES</sequence>
<proteinExistence type="inferred from homology"/>